<proteinExistence type="inferred from homology"/>
<gene>
    <name evidence="2" type="primary">cysA</name>
    <name type="ordered locus">MT2468</name>
</gene>
<organism>
    <name type="scientific">Mycobacterium tuberculosis (strain CDC 1551 / Oshkosh)</name>
    <dbReference type="NCBI Taxonomy" id="83331"/>
    <lineage>
        <taxon>Bacteria</taxon>
        <taxon>Bacillati</taxon>
        <taxon>Actinomycetota</taxon>
        <taxon>Actinomycetes</taxon>
        <taxon>Mycobacteriales</taxon>
        <taxon>Mycobacteriaceae</taxon>
        <taxon>Mycobacterium</taxon>
        <taxon>Mycobacterium tuberculosis complex</taxon>
    </lineage>
</organism>
<dbReference type="EC" id="7.3.2.3" evidence="2"/>
<dbReference type="EMBL" id="AE000516">
    <property type="protein sequence ID" value="AAK46764.1"/>
    <property type="status" value="ALT_INIT"/>
    <property type="molecule type" value="Genomic_DNA"/>
</dbReference>
<dbReference type="PIR" id="H70682">
    <property type="entry name" value="H70682"/>
</dbReference>
<dbReference type="RefSeq" id="WP_003412325.1">
    <property type="nucleotide sequence ID" value="NZ_KK341227.1"/>
</dbReference>
<dbReference type="SMR" id="P9WQM0"/>
<dbReference type="KEGG" id="mtc:MT2468"/>
<dbReference type="PATRIC" id="fig|83331.31.peg.2660"/>
<dbReference type="HOGENOM" id="CLU_000604_1_1_11"/>
<dbReference type="Proteomes" id="UP000001020">
    <property type="component" value="Chromosome"/>
</dbReference>
<dbReference type="GO" id="GO:0043190">
    <property type="term" value="C:ATP-binding cassette (ABC) transporter complex"/>
    <property type="evidence" value="ECO:0007669"/>
    <property type="project" value="InterPro"/>
</dbReference>
<dbReference type="GO" id="GO:0015419">
    <property type="term" value="F:ABC-type sulfate transporter activity"/>
    <property type="evidence" value="ECO:0007669"/>
    <property type="project" value="InterPro"/>
</dbReference>
<dbReference type="GO" id="GO:0102025">
    <property type="term" value="F:ABC-type thiosulfate transporter activity"/>
    <property type="evidence" value="ECO:0007669"/>
    <property type="project" value="RHEA"/>
</dbReference>
<dbReference type="GO" id="GO:0005524">
    <property type="term" value="F:ATP binding"/>
    <property type="evidence" value="ECO:0007669"/>
    <property type="project" value="UniProtKB-KW"/>
</dbReference>
<dbReference type="GO" id="GO:0016887">
    <property type="term" value="F:ATP hydrolysis activity"/>
    <property type="evidence" value="ECO:0007669"/>
    <property type="project" value="InterPro"/>
</dbReference>
<dbReference type="CDD" id="cd03296">
    <property type="entry name" value="ABC_CysA_sulfate_importer"/>
    <property type="match status" value="1"/>
</dbReference>
<dbReference type="FunFam" id="3.40.50.300:FF:001655">
    <property type="entry name" value="Sulfate/thiosulfate import ATP-binding protein CysA"/>
    <property type="match status" value="1"/>
</dbReference>
<dbReference type="Gene3D" id="3.40.50.300">
    <property type="entry name" value="P-loop containing nucleotide triphosphate hydrolases"/>
    <property type="match status" value="1"/>
</dbReference>
<dbReference type="InterPro" id="IPR003593">
    <property type="entry name" value="AAA+_ATPase"/>
</dbReference>
<dbReference type="InterPro" id="IPR050093">
    <property type="entry name" value="ABC_SmlMolc_Importer"/>
</dbReference>
<dbReference type="InterPro" id="IPR003439">
    <property type="entry name" value="ABC_transporter-like_ATP-bd"/>
</dbReference>
<dbReference type="InterPro" id="IPR017871">
    <property type="entry name" value="ABC_transporter-like_CS"/>
</dbReference>
<dbReference type="InterPro" id="IPR008995">
    <property type="entry name" value="Mo/tungstate-bd_C_term_dom"/>
</dbReference>
<dbReference type="InterPro" id="IPR027417">
    <property type="entry name" value="P-loop_NTPase"/>
</dbReference>
<dbReference type="InterPro" id="IPR005666">
    <property type="entry name" value="Sulph_transpt1"/>
</dbReference>
<dbReference type="InterPro" id="IPR024765">
    <property type="entry name" value="TOBE-like"/>
</dbReference>
<dbReference type="NCBIfam" id="TIGR00968">
    <property type="entry name" value="3a0106s01"/>
    <property type="match status" value="1"/>
</dbReference>
<dbReference type="PANTHER" id="PTHR42781">
    <property type="entry name" value="SPERMIDINE/PUTRESCINE IMPORT ATP-BINDING PROTEIN POTA"/>
    <property type="match status" value="1"/>
</dbReference>
<dbReference type="PANTHER" id="PTHR42781:SF4">
    <property type="entry name" value="SPERMIDINE_PUTRESCINE IMPORT ATP-BINDING PROTEIN POTA"/>
    <property type="match status" value="1"/>
</dbReference>
<dbReference type="Pfam" id="PF00005">
    <property type="entry name" value="ABC_tran"/>
    <property type="match status" value="1"/>
</dbReference>
<dbReference type="Pfam" id="PF12857">
    <property type="entry name" value="TOBE_3"/>
    <property type="match status" value="1"/>
</dbReference>
<dbReference type="SMART" id="SM00382">
    <property type="entry name" value="AAA"/>
    <property type="match status" value="1"/>
</dbReference>
<dbReference type="SUPFAM" id="SSF50331">
    <property type="entry name" value="MOP-like"/>
    <property type="match status" value="1"/>
</dbReference>
<dbReference type="SUPFAM" id="SSF52540">
    <property type="entry name" value="P-loop containing nucleoside triphosphate hydrolases"/>
    <property type="match status" value="1"/>
</dbReference>
<dbReference type="PROSITE" id="PS00211">
    <property type="entry name" value="ABC_TRANSPORTER_1"/>
    <property type="match status" value="1"/>
</dbReference>
<dbReference type="PROSITE" id="PS50893">
    <property type="entry name" value="ABC_TRANSPORTER_2"/>
    <property type="match status" value="1"/>
</dbReference>
<dbReference type="PROSITE" id="PS51237">
    <property type="entry name" value="CYSA"/>
    <property type="match status" value="1"/>
</dbReference>
<evidence type="ECO:0000250" key="1">
    <source>
        <dbReference type="UniProtKB" id="P9WQM1"/>
    </source>
</evidence>
<evidence type="ECO:0000255" key="2">
    <source>
        <dbReference type="HAMAP-Rule" id="MF_01701"/>
    </source>
</evidence>
<evidence type="ECO:0000305" key="3"/>
<protein>
    <recommendedName>
        <fullName evidence="2">Sulfate/thiosulfate import ATP-binding protein CysA</fullName>
        <ecNumber evidence="2">7.3.2.3</ecNumber>
    </recommendedName>
    <alternativeName>
        <fullName evidence="2">Sulfate-transporting ATPase</fullName>
    </alternativeName>
</protein>
<name>CYSA_MYCTO</name>
<comment type="function">
    <text evidence="2">Part of the ABC transporter complex CysAWTP involved in sulfate/thiosulfate import. Responsible for energy coupling to the transport system.</text>
</comment>
<comment type="catalytic activity">
    <reaction evidence="2">
        <text>sulfate(out) + ATP + H2O = sulfate(in) + ADP + phosphate + H(+)</text>
        <dbReference type="Rhea" id="RHEA:10192"/>
        <dbReference type="ChEBI" id="CHEBI:15377"/>
        <dbReference type="ChEBI" id="CHEBI:15378"/>
        <dbReference type="ChEBI" id="CHEBI:16189"/>
        <dbReference type="ChEBI" id="CHEBI:30616"/>
        <dbReference type="ChEBI" id="CHEBI:43474"/>
        <dbReference type="ChEBI" id="CHEBI:456216"/>
        <dbReference type="EC" id="7.3.2.3"/>
    </reaction>
</comment>
<comment type="catalytic activity">
    <reaction evidence="2">
        <text>thiosulfate(out) + ATP + H2O = thiosulfate(in) + ADP + phosphate + H(+)</text>
        <dbReference type="Rhea" id="RHEA:29871"/>
        <dbReference type="ChEBI" id="CHEBI:15377"/>
        <dbReference type="ChEBI" id="CHEBI:15378"/>
        <dbReference type="ChEBI" id="CHEBI:30616"/>
        <dbReference type="ChEBI" id="CHEBI:33542"/>
        <dbReference type="ChEBI" id="CHEBI:43474"/>
        <dbReference type="ChEBI" id="CHEBI:456216"/>
        <dbReference type="EC" id="7.3.2.3"/>
    </reaction>
</comment>
<comment type="subunit">
    <text evidence="2">The complex is composed of two ATP-binding proteins (CysA), two transmembrane proteins (CysT and CysW) and a solute-binding protein (CysP).</text>
</comment>
<comment type="subcellular location">
    <subcellularLocation>
        <location evidence="2">Cell membrane</location>
        <topology evidence="2">Peripheral membrane protein</topology>
    </subcellularLocation>
</comment>
<comment type="similarity">
    <text evidence="2">Belongs to the ABC transporter superfamily. Sulfate/tungstate importer (TC 3.A.1.6) family.</text>
</comment>
<comment type="sequence caution" evidence="3">
    <conflict type="erroneous initiation">
        <sequence resource="EMBL-CDS" id="AAK46764"/>
    </conflict>
    <text>Extended N-terminus.</text>
</comment>
<accession>P9WQM0</accession>
<accession>L0TC79</accession>
<accession>P0A4W2</accession>
<accession>P71747</accession>
<reference key="1">
    <citation type="journal article" date="2002" name="J. Bacteriol.">
        <title>Whole-genome comparison of Mycobacterium tuberculosis clinical and laboratory strains.</title>
        <authorList>
            <person name="Fleischmann R.D."/>
            <person name="Alland D."/>
            <person name="Eisen J.A."/>
            <person name="Carpenter L."/>
            <person name="White O."/>
            <person name="Peterson J.D."/>
            <person name="DeBoy R.T."/>
            <person name="Dodson R.J."/>
            <person name="Gwinn M.L."/>
            <person name="Haft D.H."/>
            <person name="Hickey E.K."/>
            <person name="Kolonay J.F."/>
            <person name="Nelson W.C."/>
            <person name="Umayam L.A."/>
            <person name="Ermolaeva M.D."/>
            <person name="Salzberg S.L."/>
            <person name="Delcher A."/>
            <person name="Utterback T.R."/>
            <person name="Weidman J.F."/>
            <person name="Khouri H.M."/>
            <person name="Gill J."/>
            <person name="Mikula A."/>
            <person name="Bishai W."/>
            <person name="Jacobs W.R. Jr."/>
            <person name="Venter J.C."/>
            <person name="Fraser C.M."/>
        </authorList>
    </citation>
    <scope>NUCLEOTIDE SEQUENCE [LARGE SCALE GENOMIC DNA]</scope>
    <source>
        <strain>CDC 1551 / Oshkosh</strain>
    </source>
</reference>
<sequence length="351" mass="37444">MTYAIVVADATKRYGDFVALDHVDFVVPTGSLTALLGPSGSGKSTLLRTIAGLDQPDTGTITINGRDVTRVPPQRRGIGFVFQHYAAFKHLTVRDNVAFGLKIRKRPKAEIKAKVDNLLQVVGLSGFQSRYPNQLSGGQRQRMALARALAVDPEVLLLDEPFGALDAKVREELRAWLRRLHDEVHVTTVLVTHDQAEALDVADRIAVLHKGRIEQVGSPTDVYDAPANAFVMSFLGAVSTLNGSLVRPHDIRVGRTPNMAVAAADGTAGSTGVLRAVVDRVVVLGFEVRVELTSAATGGAFTAQITRGDAEALALREGDTVYVRATRVPPIAGGVSGVDDAGVERVKVTST</sequence>
<feature type="initiator methionine" description="Removed" evidence="1">
    <location>
        <position position="1"/>
    </location>
</feature>
<feature type="chain" id="PRO_0000426752" description="Sulfate/thiosulfate import ATP-binding protein CysA">
    <location>
        <begin position="2"/>
        <end position="351"/>
    </location>
</feature>
<feature type="domain" description="ABC transporter" evidence="2">
    <location>
        <begin position="5"/>
        <end position="235"/>
    </location>
</feature>
<feature type="binding site" evidence="2">
    <location>
        <begin position="37"/>
        <end position="44"/>
    </location>
    <ligand>
        <name>ATP</name>
        <dbReference type="ChEBI" id="CHEBI:30616"/>
    </ligand>
</feature>
<feature type="modified residue" description="N-acetylthreonine" evidence="1">
    <location>
        <position position="2"/>
    </location>
</feature>
<keyword id="KW-0007">Acetylation</keyword>
<keyword id="KW-0067">ATP-binding</keyword>
<keyword id="KW-1003">Cell membrane</keyword>
<keyword id="KW-0472">Membrane</keyword>
<keyword id="KW-0547">Nucleotide-binding</keyword>
<keyword id="KW-1185">Reference proteome</keyword>
<keyword id="KW-0764">Sulfate transport</keyword>
<keyword id="KW-1278">Translocase</keyword>
<keyword id="KW-0813">Transport</keyword>